<accession>Q9V2M0</accession>
<accession>G8ZFN6</accession>
<organism>
    <name type="scientific">Pyrococcus abyssi (strain GE5 / Orsay)</name>
    <dbReference type="NCBI Taxonomy" id="272844"/>
    <lineage>
        <taxon>Archaea</taxon>
        <taxon>Methanobacteriati</taxon>
        <taxon>Methanobacteriota</taxon>
        <taxon>Thermococci</taxon>
        <taxon>Thermococcales</taxon>
        <taxon>Thermococcaceae</taxon>
        <taxon>Pyrococcus</taxon>
    </lineage>
</organism>
<dbReference type="EMBL" id="AJ248283">
    <property type="protein sequence ID" value="CAB48978.1"/>
    <property type="molecule type" value="Genomic_DNA"/>
</dbReference>
<dbReference type="EMBL" id="HE613800">
    <property type="protein sequence ID" value="CCE69427.1"/>
    <property type="molecule type" value="Genomic_DNA"/>
</dbReference>
<dbReference type="PIR" id="C75191">
    <property type="entry name" value="C75191"/>
</dbReference>
<dbReference type="RefSeq" id="WP_010867179.1">
    <property type="nucleotide sequence ID" value="NC_000868.1"/>
</dbReference>
<dbReference type="SMR" id="Q9V2M0"/>
<dbReference type="STRING" id="272844.PAB2312"/>
<dbReference type="KEGG" id="pab:PAB2312"/>
<dbReference type="PATRIC" id="fig|272844.11.peg.62"/>
<dbReference type="eggNOG" id="arCOG01580">
    <property type="taxonomic scope" value="Archaea"/>
</dbReference>
<dbReference type="HOGENOM" id="CLU_091233_3_0_2"/>
<dbReference type="OrthoDB" id="6762at2157"/>
<dbReference type="PhylomeDB" id="Q9V2M0"/>
<dbReference type="Proteomes" id="UP000000810">
    <property type="component" value="Chromosome"/>
</dbReference>
<dbReference type="Proteomes" id="UP000009139">
    <property type="component" value="Chromosome"/>
</dbReference>
<dbReference type="GO" id="GO:0005829">
    <property type="term" value="C:cytosol"/>
    <property type="evidence" value="ECO:0007669"/>
    <property type="project" value="TreeGrafter"/>
</dbReference>
<dbReference type="GO" id="GO:0043565">
    <property type="term" value="F:sequence-specific DNA binding"/>
    <property type="evidence" value="ECO:0007669"/>
    <property type="project" value="InterPro"/>
</dbReference>
<dbReference type="GO" id="GO:0043200">
    <property type="term" value="P:response to amino acid"/>
    <property type="evidence" value="ECO:0007669"/>
    <property type="project" value="TreeGrafter"/>
</dbReference>
<dbReference type="Gene3D" id="3.30.70.920">
    <property type="match status" value="1"/>
</dbReference>
<dbReference type="Gene3D" id="1.10.10.10">
    <property type="entry name" value="Winged helix-like DNA-binding domain superfamily/Winged helix DNA-binding domain"/>
    <property type="match status" value="1"/>
</dbReference>
<dbReference type="InterPro" id="IPR000485">
    <property type="entry name" value="AsnC-type_HTH_dom"/>
</dbReference>
<dbReference type="InterPro" id="IPR011008">
    <property type="entry name" value="Dimeric_a/b-barrel"/>
</dbReference>
<dbReference type="InterPro" id="IPR019888">
    <property type="entry name" value="Tscrpt_reg_AsnC-like"/>
</dbReference>
<dbReference type="InterPro" id="IPR019887">
    <property type="entry name" value="Tscrpt_reg_AsnC/Lrp_C"/>
</dbReference>
<dbReference type="InterPro" id="IPR019885">
    <property type="entry name" value="Tscrpt_reg_HTH_AsnC-type_CS"/>
</dbReference>
<dbReference type="InterPro" id="IPR036388">
    <property type="entry name" value="WH-like_DNA-bd_sf"/>
</dbReference>
<dbReference type="InterPro" id="IPR036390">
    <property type="entry name" value="WH_DNA-bd_sf"/>
</dbReference>
<dbReference type="PANTHER" id="PTHR30154">
    <property type="entry name" value="LEUCINE-RESPONSIVE REGULATORY PROTEIN"/>
    <property type="match status" value="1"/>
</dbReference>
<dbReference type="PANTHER" id="PTHR30154:SF50">
    <property type="entry name" value="TRANSCRIPTIONAL REGULATOR, ASNC FAMILY"/>
    <property type="match status" value="1"/>
</dbReference>
<dbReference type="Pfam" id="PF01037">
    <property type="entry name" value="AsnC_trans_reg"/>
    <property type="match status" value="1"/>
</dbReference>
<dbReference type="Pfam" id="PF13404">
    <property type="entry name" value="HTH_AsnC-type"/>
    <property type="match status" value="1"/>
</dbReference>
<dbReference type="PRINTS" id="PR00033">
    <property type="entry name" value="HTHASNC"/>
</dbReference>
<dbReference type="SMART" id="SM00344">
    <property type="entry name" value="HTH_ASNC"/>
    <property type="match status" value="1"/>
</dbReference>
<dbReference type="SUPFAM" id="SSF54909">
    <property type="entry name" value="Dimeric alpha+beta barrel"/>
    <property type="match status" value="1"/>
</dbReference>
<dbReference type="SUPFAM" id="SSF46785">
    <property type="entry name" value="Winged helix' DNA-binding domain"/>
    <property type="match status" value="1"/>
</dbReference>
<dbReference type="PROSITE" id="PS00519">
    <property type="entry name" value="HTH_ASNC_1"/>
    <property type="match status" value="1"/>
</dbReference>
<dbReference type="PROSITE" id="PS50956">
    <property type="entry name" value="HTH_ASNC_2"/>
    <property type="match status" value="1"/>
</dbReference>
<feature type="chain" id="PRO_0000111754" description="Uncharacterized HTH-type transcriptional regulator PYRAB00550">
    <location>
        <begin position="1"/>
        <end position="155"/>
    </location>
</feature>
<feature type="domain" description="HTH asnC-type" evidence="1">
    <location>
        <begin position="4"/>
        <end position="65"/>
    </location>
</feature>
<feature type="DNA-binding region" description="H-T-H motif" evidence="1">
    <location>
        <begin position="23"/>
        <end position="42"/>
    </location>
</feature>
<keyword id="KW-0238">DNA-binding</keyword>
<keyword id="KW-0804">Transcription</keyword>
<keyword id="KW-0805">Transcription regulation</keyword>
<gene>
    <name type="ordered locus">PYRAB00550</name>
    <name type="ORF">PAB2312</name>
</gene>
<evidence type="ECO:0000255" key="1">
    <source>
        <dbReference type="PROSITE-ProRule" id="PRU00319"/>
    </source>
</evidence>
<sequence length="155" mass="17511">MAGIDEIDEIIVRELRKNSRITLTELGKKVGLTASAVKNRIEKLEKLGVIKGYSAVVDTSFFGEFLTAIIEVELVDPEAPDLAKVLQPILRMRNISDVYKKSGEFQLAIRGTFRDVDSLNSFLKDLRKVYLKNLARRMRVSIVLENFKEAGVILK</sequence>
<reference key="1">
    <citation type="journal article" date="2003" name="Mol. Microbiol.">
        <title>An integrated analysis of the genome of the hyperthermophilic archaeon Pyrococcus abyssi.</title>
        <authorList>
            <person name="Cohen G.N."/>
            <person name="Barbe V."/>
            <person name="Flament D."/>
            <person name="Galperin M."/>
            <person name="Heilig R."/>
            <person name="Lecompte O."/>
            <person name="Poch O."/>
            <person name="Prieur D."/>
            <person name="Querellou J."/>
            <person name="Ripp R."/>
            <person name="Thierry J.-C."/>
            <person name="Van der Oost J."/>
            <person name="Weissenbach J."/>
            <person name="Zivanovic Y."/>
            <person name="Forterre P."/>
        </authorList>
    </citation>
    <scope>NUCLEOTIDE SEQUENCE [LARGE SCALE GENOMIC DNA]</scope>
    <source>
        <strain>GE5 / Orsay</strain>
    </source>
</reference>
<reference key="2">
    <citation type="journal article" date="2012" name="Curr. Microbiol.">
        <title>Re-annotation of two hyperthermophilic archaea Pyrococcus abyssi GE5 and Pyrococcus furiosus DSM 3638.</title>
        <authorList>
            <person name="Gao J."/>
            <person name="Wang J."/>
        </authorList>
    </citation>
    <scope>GENOME REANNOTATION</scope>
    <source>
        <strain>GE5 / Orsay</strain>
    </source>
</reference>
<proteinExistence type="predicted"/>
<name>REG1_PYRAB</name>
<protein>
    <recommendedName>
        <fullName>Uncharacterized HTH-type transcriptional regulator PYRAB00550</fullName>
    </recommendedName>
</protein>